<organism>
    <name type="scientific">Mus musculus</name>
    <name type="common">Mouse</name>
    <dbReference type="NCBI Taxonomy" id="10090"/>
    <lineage>
        <taxon>Eukaryota</taxon>
        <taxon>Metazoa</taxon>
        <taxon>Chordata</taxon>
        <taxon>Craniata</taxon>
        <taxon>Vertebrata</taxon>
        <taxon>Euteleostomi</taxon>
        <taxon>Mammalia</taxon>
        <taxon>Eutheria</taxon>
        <taxon>Euarchontoglires</taxon>
        <taxon>Glires</taxon>
        <taxon>Rodentia</taxon>
        <taxon>Myomorpha</taxon>
        <taxon>Muroidea</taxon>
        <taxon>Muridae</taxon>
        <taxon>Murinae</taxon>
        <taxon>Mus</taxon>
        <taxon>Mus</taxon>
    </lineage>
</organism>
<keyword id="KW-0002">3D-structure</keyword>
<keyword id="KW-0072">Autophagy</keyword>
<keyword id="KW-0963">Cytoplasm</keyword>
<keyword id="KW-0968">Cytoplasmic vesicle</keyword>
<keyword id="KW-0206">Cytoskeleton</keyword>
<keyword id="KW-0903">Direct protein sequencing</keyword>
<keyword id="KW-0449">Lipoprotein</keyword>
<keyword id="KW-0472">Membrane</keyword>
<keyword id="KW-0493">Microtubule</keyword>
<keyword id="KW-0496">Mitochondrion</keyword>
<keyword id="KW-0597">Phosphoprotein</keyword>
<keyword id="KW-1185">Reference proteome</keyword>
<keyword id="KW-0832">Ubl conjugation</keyword>
<keyword id="KW-0833">Ubl conjugation pathway</keyword>
<evidence type="ECO:0000250" key="1">
    <source>
        <dbReference type="UniProtKB" id="Q62625"/>
    </source>
</evidence>
<evidence type="ECO:0000250" key="2">
    <source>
        <dbReference type="UniProtKB" id="Q9GZQ8"/>
    </source>
</evidence>
<evidence type="ECO:0000269" key="3">
    <source>
    </source>
</evidence>
<evidence type="ECO:0000269" key="4">
    <source>
    </source>
</evidence>
<evidence type="ECO:0000269" key="5">
    <source>
    </source>
</evidence>
<evidence type="ECO:0000269" key="6">
    <source>
    </source>
</evidence>
<evidence type="ECO:0000269" key="7">
    <source>
    </source>
</evidence>
<evidence type="ECO:0000269" key="8">
    <source>
    </source>
</evidence>
<evidence type="ECO:0000269" key="9">
    <source>
    </source>
</evidence>
<evidence type="ECO:0000269" key="10">
    <source>
    </source>
</evidence>
<evidence type="ECO:0000269" key="11">
    <source>
    </source>
</evidence>
<evidence type="ECO:0000305" key="12"/>
<evidence type="ECO:0000305" key="13">
    <source>
    </source>
</evidence>
<evidence type="ECO:0000312" key="14">
    <source>
        <dbReference type="MGI" id="MGI:1914693"/>
    </source>
</evidence>
<evidence type="ECO:0007829" key="15">
    <source>
        <dbReference type="PDB" id="5WRD"/>
    </source>
</evidence>
<evidence type="ECO:0007829" key="16">
    <source>
        <dbReference type="PDB" id="5YIS"/>
    </source>
</evidence>
<sequence length="125" mass="14617">MPSEKTFKQRRSFEQRVEDVRLIREQHPTKIPVIIERYKGEKQLPVLDKTKFLVPDHVNMSELIKIIRRRLQLNANQAFFLLVNGHSMVSVSTPISEVYESERDEDGFLYMVYASQETFGTAMAV</sequence>
<reference key="1">
    <citation type="submission" date="2000-04" db="EMBL/GenBank/DDBJ databases">
        <authorList>
            <person name="Yu L."/>
        </authorList>
    </citation>
    <scope>NUCLEOTIDE SEQUENCE [MRNA]</scope>
</reference>
<reference key="2">
    <citation type="journal article" date="2005" name="Science">
        <title>The transcriptional landscape of the mammalian genome.</title>
        <authorList>
            <person name="Carninci P."/>
            <person name="Kasukawa T."/>
            <person name="Katayama S."/>
            <person name="Gough J."/>
            <person name="Frith M.C."/>
            <person name="Maeda N."/>
            <person name="Oyama R."/>
            <person name="Ravasi T."/>
            <person name="Lenhard B."/>
            <person name="Wells C."/>
            <person name="Kodzius R."/>
            <person name="Shimokawa K."/>
            <person name="Bajic V.B."/>
            <person name="Brenner S.E."/>
            <person name="Batalov S."/>
            <person name="Forrest A.R."/>
            <person name="Zavolan M."/>
            <person name="Davis M.J."/>
            <person name="Wilming L.G."/>
            <person name="Aidinis V."/>
            <person name="Allen J.E."/>
            <person name="Ambesi-Impiombato A."/>
            <person name="Apweiler R."/>
            <person name="Aturaliya R.N."/>
            <person name="Bailey T.L."/>
            <person name="Bansal M."/>
            <person name="Baxter L."/>
            <person name="Beisel K.W."/>
            <person name="Bersano T."/>
            <person name="Bono H."/>
            <person name="Chalk A.M."/>
            <person name="Chiu K.P."/>
            <person name="Choudhary V."/>
            <person name="Christoffels A."/>
            <person name="Clutterbuck D.R."/>
            <person name="Crowe M.L."/>
            <person name="Dalla E."/>
            <person name="Dalrymple B.P."/>
            <person name="de Bono B."/>
            <person name="Della Gatta G."/>
            <person name="di Bernardo D."/>
            <person name="Down T."/>
            <person name="Engstrom P."/>
            <person name="Fagiolini M."/>
            <person name="Faulkner G."/>
            <person name="Fletcher C.F."/>
            <person name="Fukushima T."/>
            <person name="Furuno M."/>
            <person name="Futaki S."/>
            <person name="Gariboldi M."/>
            <person name="Georgii-Hemming P."/>
            <person name="Gingeras T.R."/>
            <person name="Gojobori T."/>
            <person name="Green R.E."/>
            <person name="Gustincich S."/>
            <person name="Harbers M."/>
            <person name="Hayashi Y."/>
            <person name="Hensch T.K."/>
            <person name="Hirokawa N."/>
            <person name="Hill D."/>
            <person name="Huminiecki L."/>
            <person name="Iacono M."/>
            <person name="Ikeo K."/>
            <person name="Iwama A."/>
            <person name="Ishikawa T."/>
            <person name="Jakt M."/>
            <person name="Kanapin A."/>
            <person name="Katoh M."/>
            <person name="Kawasawa Y."/>
            <person name="Kelso J."/>
            <person name="Kitamura H."/>
            <person name="Kitano H."/>
            <person name="Kollias G."/>
            <person name="Krishnan S.P."/>
            <person name="Kruger A."/>
            <person name="Kummerfeld S.K."/>
            <person name="Kurochkin I.V."/>
            <person name="Lareau L.F."/>
            <person name="Lazarevic D."/>
            <person name="Lipovich L."/>
            <person name="Liu J."/>
            <person name="Liuni S."/>
            <person name="McWilliam S."/>
            <person name="Madan Babu M."/>
            <person name="Madera M."/>
            <person name="Marchionni L."/>
            <person name="Matsuda H."/>
            <person name="Matsuzawa S."/>
            <person name="Miki H."/>
            <person name="Mignone F."/>
            <person name="Miyake S."/>
            <person name="Morris K."/>
            <person name="Mottagui-Tabar S."/>
            <person name="Mulder N."/>
            <person name="Nakano N."/>
            <person name="Nakauchi H."/>
            <person name="Ng P."/>
            <person name="Nilsson R."/>
            <person name="Nishiguchi S."/>
            <person name="Nishikawa S."/>
            <person name="Nori F."/>
            <person name="Ohara O."/>
            <person name="Okazaki Y."/>
            <person name="Orlando V."/>
            <person name="Pang K.C."/>
            <person name="Pavan W.J."/>
            <person name="Pavesi G."/>
            <person name="Pesole G."/>
            <person name="Petrovsky N."/>
            <person name="Piazza S."/>
            <person name="Reed J."/>
            <person name="Reid J.F."/>
            <person name="Ring B.Z."/>
            <person name="Ringwald M."/>
            <person name="Rost B."/>
            <person name="Ruan Y."/>
            <person name="Salzberg S.L."/>
            <person name="Sandelin A."/>
            <person name="Schneider C."/>
            <person name="Schoenbach C."/>
            <person name="Sekiguchi K."/>
            <person name="Semple C.A."/>
            <person name="Seno S."/>
            <person name="Sessa L."/>
            <person name="Sheng Y."/>
            <person name="Shibata Y."/>
            <person name="Shimada H."/>
            <person name="Shimada K."/>
            <person name="Silva D."/>
            <person name="Sinclair B."/>
            <person name="Sperling S."/>
            <person name="Stupka E."/>
            <person name="Sugiura K."/>
            <person name="Sultana R."/>
            <person name="Takenaka Y."/>
            <person name="Taki K."/>
            <person name="Tammoja K."/>
            <person name="Tan S.L."/>
            <person name="Tang S."/>
            <person name="Taylor M.S."/>
            <person name="Tegner J."/>
            <person name="Teichmann S.A."/>
            <person name="Ueda H.R."/>
            <person name="van Nimwegen E."/>
            <person name="Verardo R."/>
            <person name="Wei C.L."/>
            <person name="Yagi K."/>
            <person name="Yamanishi H."/>
            <person name="Zabarovsky E."/>
            <person name="Zhu S."/>
            <person name="Zimmer A."/>
            <person name="Hide W."/>
            <person name="Bult C."/>
            <person name="Grimmond S.M."/>
            <person name="Teasdale R.D."/>
            <person name="Liu E.T."/>
            <person name="Brusic V."/>
            <person name="Quackenbush J."/>
            <person name="Wahlestedt C."/>
            <person name="Mattick J.S."/>
            <person name="Hume D.A."/>
            <person name="Kai C."/>
            <person name="Sasaki D."/>
            <person name="Tomaru Y."/>
            <person name="Fukuda S."/>
            <person name="Kanamori-Katayama M."/>
            <person name="Suzuki M."/>
            <person name="Aoki J."/>
            <person name="Arakawa T."/>
            <person name="Iida J."/>
            <person name="Imamura K."/>
            <person name="Itoh M."/>
            <person name="Kato T."/>
            <person name="Kawaji H."/>
            <person name="Kawagashira N."/>
            <person name="Kawashima T."/>
            <person name="Kojima M."/>
            <person name="Kondo S."/>
            <person name="Konno H."/>
            <person name="Nakano K."/>
            <person name="Ninomiya N."/>
            <person name="Nishio T."/>
            <person name="Okada M."/>
            <person name="Plessy C."/>
            <person name="Shibata K."/>
            <person name="Shiraki T."/>
            <person name="Suzuki S."/>
            <person name="Tagami M."/>
            <person name="Waki K."/>
            <person name="Watahiki A."/>
            <person name="Okamura-Oho Y."/>
            <person name="Suzuki H."/>
            <person name="Kawai J."/>
            <person name="Hayashizaki Y."/>
        </authorList>
    </citation>
    <scope>NUCLEOTIDE SEQUENCE [LARGE SCALE MRNA]</scope>
    <source>
        <strain>C57BL/6J</strain>
        <tissue>Bone marrow</tissue>
        <tissue>Embryo</tissue>
        <tissue>Head</tissue>
        <tissue>Heart</tissue>
        <tissue>Kidney</tissue>
    </source>
</reference>
<reference key="3">
    <citation type="journal article" date="2004" name="Genome Res.">
        <title>The status, quality, and expansion of the NIH full-length cDNA project: the Mammalian Gene Collection (MGC).</title>
        <authorList>
            <consortium name="The MGC Project Team"/>
        </authorList>
    </citation>
    <scope>NUCLEOTIDE SEQUENCE [LARGE SCALE MRNA]</scope>
    <source>
        <strain>C57BL/6J</strain>
        <tissue>Brain</tissue>
    </source>
</reference>
<reference key="4">
    <citation type="submission" date="2007-04" db="UniProtKB">
        <authorList>
            <person name="Lubec G."/>
            <person name="Kang S.U."/>
        </authorList>
    </citation>
    <scope>PROTEIN SEQUENCE OF 31-37 AND 52-65</scope>
    <scope>IDENTIFICATION BY MASS SPECTROMETRY</scope>
    <source>
        <strain>C57BL/6J</strain>
        <tissue>Brain</tissue>
    </source>
</reference>
<reference key="5">
    <citation type="journal article" date="2001" name="J. Cell Biol.">
        <title>Dissection of autophagosome formation using Apg5-deficient mouse embryonic stem cells.</title>
        <authorList>
            <person name="Mizushima N."/>
            <person name="Yamamoto A."/>
            <person name="Hatano M."/>
            <person name="Kobayashi Y."/>
            <person name="Kabeya Y."/>
            <person name="Suzuki K."/>
            <person name="Tokuhisa T."/>
            <person name="Ohsumi Y."/>
            <person name="Yoshimori T."/>
        </authorList>
    </citation>
    <scope>SUBCELLULAR LOCATION</scope>
</reference>
<reference key="6">
    <citation type="journal article" date="2002" name="Biochem. Biophys. Res. Commun.">
        <title>Mammalian Apg12p, but not the Apg12p.Apg5p conjugate, facilitates LC3 processing.</title>
        <authorList>
            <person name="Tanida I."/>
            <person name="Nishitani T."/>
            <person name="Nemoto T."/>
            <person name="Ueno T."/>
            <person name="Kominami E."/>
        </authorList>
    </citation>
    <scope>SUBCELLULAR LOCATION</scope>
    <scope>PROTEOLYTIC CLEAVAGE</scope>
</reference>
<reference key="7">
    <citation type="journal article" date="2003" name="J. Biol. Chem.">
        <title>A single protease, Apg4B, is specific for the autophagy-related ubiquitin-like proteins GATE-16, MAP1-LC3, GABARAP, and Apg8L.</title>
        <authorList>
            <person name="Hemelaar J."/>
            <person name="Lelyveld V.S."/>
            <person name="Kessler B.M."/>
            <person name="Ploegh H.L."/>
        </authorList>
    </citation>
    <scope>CLEAVAGE BY ATG4B</scope>
    <scope>SUBCELLULAR LOCATION</scope>
</reference>
<reference key="8">
    <citation type="journal article" date="2004" name="Int. J. Biochem. Cell Biol.">
        <title>LC3 conjugation system in mammalian autophagy.</title>
        <authorList>
            <person name="Tanida I."/>
            <person name="Ueno T."/>
            <person name="Kominami E."/>
        </authorList>
    </citation>
    <scope>REVIEW</scope>
</reference>
<reference key="9">
    <citation type="journal article" date="2006" name="Mol. Cell. Proteomics">
        <title>Comprehensive identification of phosphorylation sites in postsynaptic density preparations.</title>
        <authorList>
            <person name="Trinidad J.C."/>
            <person name="Specht C.G."/>
            <person name="Thalhammer A."/>
            <person name="Schoepfer R."/>
            <person name="Burlingame A.L."/>
        </authorList>
    </citation>
    <scope>IDENTIFICATION BY MASS SPECTROMETRY [LARGE SCALE ANALYSIS]</scope>
    <source>
        <tissue>Brain</tissue>
    </source>
</reference>
<reference key="10">
    <citation type="journal article" date="2011" name="J. Cell Biol.">
        <title>OATL1, a novel autophagosome-resident Rab33B-GAP, regulates autophagosomal maturation.</title>
        <authorList>
            <person name="Itoh T."/>
            <person name="Kanno E."/>
            <person name="Uemura T."/>
            <person name="Waguri S."/>
            <person name="Fukuda M."/>
        </authorList>
    </citation>
    <scope>INTERACTION WITH TBC1D25</scope>
</reference>
<reference key="11">
    <citation type="journal article" date="2013" name="Biochem. Biophys. Res. Commun.">
        <title>Phospholipase C-related catalytically inactive protein, a novel microtubule-associated protein 1 light chain 3-binding protein, negatively regulates autophagosome formation.</title>
        <authorList>
            <person name="Umebayashi H."/>
            <person name="Mizokami A."/>
            <person name="Matsuda M."/>
            <person name="Harada K."/>
            <person name="Takeuchi H."/>
            <person name="Tanida I."/>
            <person name="Hirata M."/>
            <person name="Kanematsu T."/>
        </authorList>
    </citation>
    <scope>INTERACTION WITH PLCL1</scope>
</reference>
<reference key="12">
    <citation type="journal article" date="2013" name="Nature">
        <title>Functional interaction between autophagy and ciliogenesis.</title>
        <authorList>
            <person name="Pampliega O."/>
            <person name="Orhon I."/>
            <person name="Patel B."/>
            <person name="Sridhar S."/>
            <person name="Diaz-Carretero A."/>
            <person name="Beau I."/>
            <person name="Codogno P."/>
            <person name="Satir B.H."/>
            <person name="Satir P."/>
            <person name="Cuervo A.M."/>
        </authorList>
    </citation>
    <scope>SUBCELLULAR LOCATION</scope>
</reference>
<reference key="13">
    <citation type="journal article" date="2018" name="Cell Metab.">
        <title>Autophagy regulates the liver clock and glucose metabolism by degrading CRY1.</title>
        <authorList>
            <person name="Toledo M."/>
            <person name="Batista-Gonzalez A."/>
            <person name="Merheb E."/>
            <person name="Aoun M.L."/>
            <person name="Tarabra E."/>
            <person name="Feng D."/>
            <person name="Sarparanta J."/>
            <person name="Merlo P."/>
            <person name="Botre F."/>
            <person name="Schwartz G.J."/>
            <person name="Pessin J.E."/>
            <person name="Singh R."/>
        </authorList>
    </citation>
    <scope>INTERACTION WITH CRY1 AND PER2</scope>
</reference>
<reference key="14">
    <citation type="journal article" date="2019" name="Proc. Natl. Acad. Sci. U.S.A.">
        <title>Pejvakin-mediated pexophagy protects auditory hair cells against noise-induced damage.</title>
        <authorList>
            <person name="Defourny J."/>
            <person name="Aghaie A."/>
            <person name="Perfettini I."/>
            <person name="Avan P."/>
            <person name="Delmaghani S."/>
            <person name="Petit C."/>
        </authorList>
    </citation>
    <scope>INTERACTION WITH PJVK</scope>
</reference>
<reference key="15">
    <citation type="journal article" date="2021" name="Cell Death Differ.">
        <title>ATG4D is the main ATG8 delipidating enzyme in mammalian cells and protects against cerebellar neurodegeneration.</title>
        <authorList>
            <person name="Tamargo-Gomez I."/>
            <person name="Martinez-Garcia G.G."/>
            <person name="Suarez M.F."/>
            <person name="Rey V."/>
            <person name="Fueyo A."/>
            <person name="Codina-Martinez H."/>
            <person name="Bretones G."/>
            <person name="Caravia X.M."/>
            <person name="Morel E."/>
            <person name="Dupont N."/>
            <person name="Cabo R."/>
            <person name="Tomas-Zapico C."/>
            <person name="Souquere S."/>
            <person name="Pierron G."/>
            <person name="Codogno P."/>
            <person name="Lopez-Otin C."/>
            <person name="Fernandez A.F."/>
            <person name="Marino G."/>
        </authorList>
    </citation>
    <scope>LIPIDATION</scope>
    <scope>DELIPIDATION</scope>
</reference>
<reference key="16">
    <citation type="journal article" date="2021" name="EMBO Rep.">
        <title>Role of FAM134 paralogues in endoplasmic reticulum remodeling, ER-phagy, and Collagen quality control.</title>
        <authorList>
            <person name="Reggio A."/>
            <person name="Buonomo V."/>
            <person name="Berkane R."/>
            <person name="Bhaskara R.M."/>
            <person name="Tellechea M."/>
            <person name="Peluso I."/>
            <person name="Polishchuk E."/>
            <person name="Di Lorenzo G."/>
            <person name="Cirillo C."/>
            <person name="Esposito M."/>
            <person name="Hussain A."/>
            <person name="Huebner A.K."/>
            <person name="Huebner C.A."/>
            <person name="Settembre C."/>
            <person name="Hummer G."/>
            <person name="Grumati P."/>
            <person name="Stolz A."/>
        </authorList>
    </citation>
    <scope>INTERACTION WITH RETREG1; RETREG2 AND RETREG3</scope>
</reference>
<protein>
    <recommendedName>
        <fullName>Microtubule-associated protein 1 light chain 3 beta</fullName>
    </recommendedName>
    <alternativeName>
        <fullName>Autophagy-related protein LC3 B</fullName>
    </alternativeName>
    <alternativeName>
        <fullName>Autophagy-related ubiquitin-like modifier LC3 B</fullName>
    </alternativeName>
    <alternativeName>
        <fullName>MAP1 light chain 3-like protein 2</fullName>
    </alternativeName>
    <alternativeName>
        <fullName evidence="12">Microtubule-associated proteins 1A/1B light chain 3B</fullName>
        <shortName>MAP1A/MAP1B LC3 B</shortName>
        <shortName>MAP1A/MAP1B light chain 3 B</shortName>
    </alternativeName>
</protein>
<name>MLP3B_MOUSE</name>
<proteinExistence type="evidence at protein level"/>
<gene>
    <name evidence="14" type="primary">Map1lc3b</name>
    <name type="synonym">Map1alc3</name>
    <name type="synonym">Map1lc3</name>
</gene>
<dbReference type="EMBL" id="AF255953">
    <property type="protein sequence ID" value="AAL83723.1"/>
    <property type="molecule type" value="mRNA"/>
</dbReference>
<dbReference type="EMBL" id="AK002795">
    <property type="protein sequence ID" value="BAB22364.1"/>
    <property type="molecule type" value="mRNA"/>
</dbReference>
<dbReference type="EMBL" id="AK003106">
    <property type="protein sequence ID" value="BAB22569.1"/>
    <property type="molecule type" value="mRNA"/>
</dbReference>
<dbReference type="EMBL" id="AK003205">
    <property type="protein sequence ID" value="BAB22641.1"/>
    <property type="molecule type" value="mRNA"/>
</dbReference>
<dbReference type="EMBL" id="AK003558">
    <property type="protein sequence ID" value="BAB22855.1"/>
    <property type="molecule type" value="mRNA"/>
</dbReference>
<dbReference type="EMBL" id="AK012604">
    <property type="protein sequence ID" value="BAB28350.1"/>
    <property type="molecule type" value="mRNA"/>
</dbReference>
<dbReference type="EMBL" id="AK132329">
    <property type="protein sequence ID" value="BAE21108.1"/>
    <property type="molecule type" value="mRNA"/>
</dbReference>
<dbReference type="EMBL" id="AK151614">
    <property type="protein sequence ID" value="BAE30551.1"/>
    <property type="molecule type" value="mRNA"/>
</dbReference>
<dbReference type="EMBL" id="BC068180">
    <property type="protein sequence ID" value="AAH68180.1"/>
    <property type="molecule type" value="mRNA"/>
</dbReference>
<dbReference type="CCDS" id="CCDS22726.1"/>
<dbReference type="RefSeq" id="NP_080436.1">
    <property type="nucleotide sequence ID" value="NM_026160.5"/>
</dbReference>
<dbReference type="PDB" id="5WRD">
    <property type="method" value="X-ray"/>
    <property type="resolution" value="1.90 A"/>
    <property type="chains" value="A/B=1-125"/>
</dbReference>
<dbReference type="PDB" id="5YIQ">
    <property type="method" value="X-ray"/>
    <property type="resolution" value="2.60 A"/>
    <property type="chains" value="A=1-125"/>
</dbReference>
<dbReference type="PDB" id="5YIS">
    <property type="method" value="X-ray"/>
    <property type="resolution" value="2.20 A"/>
    <property type="chains" value="A/B=1-125"/>
</dbReference>
<dbReference type="PDBsum" id="5WRD"/>
<dbReference type="PDBsum" id="5YIQ"/>
<dbReference type="PDBsum" id="5YIS"/>
<dbReference type="BMRB" id="Q9CQV6"/>
<dbReference type="SMR" id="Q9CQV6"/>
<dbReference type="BioGRID" id="212190">
    <property type="interactions" value="29"/>
</dbReference>
<dbReference type="DIP" id="DIP-61580N"/>
<dbReference type="ELM" id="Q9CQV6"/>
<dbReference type="FunCoup" id="Q9CQV6">
    <property type="interactions" value="679"/>
</dbReference>
<dbReference type="IntAct" id="Q9CQV6">
    <property type="interactions" value="8"/>
</dbReference>
<dbReference type="MINT" id="Q9CQV6"/>
<dbReference type="STRING" id="10090.ENSMUSP00000034270"/>
<dbReference type="GlyGen" id="Q9CQV6">
    <property type="glycosylation" value="1 site, 1 O-linked glycan (1 site)"/>
</dbReference>
<dbReference type="iPTMnet" id="Q9CQV6"/>
<dbReference type="PhosphoSitePlus" id="Q9CQV6"/>
<dbReference type="SwissPalm" id="Q9CQV6"/>
<dbReference type="jPOST" id="Q9CQV6"/>
<dbReference type="PaxDb" id="10090-ENSMUSP00000034270"/>
<dbReference type="ProteomicsDB" id="290260"/>
<dbReference type="Pumba" id="Q9CQV6"/>
<dbReference type="DNASU" id="67443"/>
<dbReference type="Ensembl" id="ENSMUST00000034270.17">
    <property type="protein sequence ID" value="ENSMUSP00000034270.10"/>
    <property type="gene ID" value="ENSMUSG00000031812.17"/>
</dbReference>
<dbReference type="GeneID" id="67443"/>
<dbReference type="KEGG" id="mmu:67443"/>
<dbReference type="UCSC" id="uc009nrw.1">
    <property type="organism name" value="mouse"/>
</dbReference>
<dbReference type="AGR" id="MGI:1914693"/>
<dbReference type="CTD" id="81631"/>
<dbReference type="MGI" id="MGI:1914693">
    <property type="gene designation" value="Map1lc3b"/>
</dbReference>
<dbReference type="VEuPathDB" id="HostDB:ENSMUSG00000031812"/>
<dbReference type="eggNOG" id="KOG1654">
    <property type="taxonomic scope" value="Eukaryota"/>
</dbReference>
<dbReference type="HOGENOM" id="CLU_119276_1_0_1"/>
<dbReference type="InParanoid" id="Q9CQV6"/>
<dbReference type="OMA" id="MNMYQLY"/>
<dbReference type="OrthoDB" id="6738456at2759"/>
<dbReference type="PhylomeDB" id="Q9CQV6"/>
<dbReference type="TreeFam" id="TF312964"/>
<dbReference type="Reactome" id="R-MMU-1632852">
    <property type="pathway name" value="Macroautophagy"/>
</dbReference>
<dbReference type="Reactome" id="R-MMU-5205685">
    <property type="pathway name" value="PINK1-PRKN Mediated Mitophagy"/>
</dbReference>
<dbReference type="Reactome" id="R-MMU-8854214">
    <property type="pathway name" value="TBC/RABGAPs"/>
</dbReference>
<dbReference type="Reactome" id="R-MMU-8934903">
    <property type="pathway name" value="Receptor Mediated Mitophagy"/>
</dbReference>
<dbReference type="Reactome" id="R-MMU-9664873">
    <property type="pathway name" value="Pexophagy"/>
</dbReference>
<dbReference type="Reactome" id="R-MMU-9755511">
    <property type="pathway name" value="KEAP1-NFE2L2 pathway"/>
</dbReference>
<dbReference type="BioGRID-ORCS" id="67443">
    <property type="hits" value="3 hits in 77 CRISPR screens"/>
</dbReference>
<dbReference type="ChiTaRS" id="Map1lc3b">
    <property type="organism name" value="mouse"/>
</dbReference>
<dbReference type="PRO" id="PR:Q9CQV6"/>
<dbReference type="Proteomes" id="UP000000589">
    <property type="component" value="Chromosome 8"/>
</dbReference>
<dbReference type="RNAct" id="Q9CQV6">
    <property type="molecule type" value="protein"/>
</dbReference>
<dbReference type="Bgee" id="ENSMUSG00000031812">
    <property type="expression patterns" value="Expressed in external carotid artery and 258 other cell types or tissues"/>
</dbReference>
<dbReference type="ExpressionAtlas" id="Q9CQV6">
    <property type="expression patterns" value="baseline and differential"/>
</dbReference>
<dbReference type="GO" id="GO:0044754">
    <property type="term" value="C:autolysosome"/>
    <property type="evidence" value="ECO:0000314"/>
    <property type="project" value="MGI"/>
</dbReference>
<dbReference type="GO" id="GO:0005776">
    <property type="term" value="C:autophagosome"/>
    <property type="evidence" value="ECO:0000314"/>
    <property type="project" value="CAFA"/>
</dbReference>
<dbReference type="GO" id="GO:0000421">
    <property type="term" value="C:autophagosome membrane"/>
    <property type="evidence" value="ECO:0007669"/>
    <property type="project" value="UniProtKB-SubCell"/>
</dbReference>
<dbReference type="GO" id="GO:0005930">
    <property type="term" value="C:axoneme"/>
    <property type="evidence" value="ECO:0000314"/>
    <property type="project" value="UniProtKB"/>
</dbReference>
<dbReference type="GO" id="GO:0031410">
    <property type="term" value="C:cytoplasmic vesicle"/>
    <property type="evidence" value="ECO:0000250"/>
    <property type="project" value="UniProtKB"/>
</dbReference>
<dbReference type="GO" id="GO:0012505">
    <property type="term" value="C:endomembrane system"/>
    <property type="evidence" value="ECO:0007669"/>
    <property type="project" value="UniProtKB-SubCell"/>
</dbReference>
<dbReference type="GO" id="GO:0016020">
    <property type="term" value="C:membrane"/>
    <property type="evidence" value="ECO:0000314"/>
    <property type="project" value="MGI"/>
</dbReference>
<dbReference type="GO" id="GO:0005874">
    <property type="term" value="C:microtubule"/>
    <property type="evidence" value="ECO:0007669"/>
    <property type="project" value="UniProtKB-KW"/>
</dbReference>
<dbReference type="GO" id="GO:0031966">
    <property type="term" value="C:mitochondrial membrane"/>
    <property type="evidence" value="ECO:0007669"/>
    <property type="project" value="UniProtKB-SubCell"/>
</dbReference>
<dbReference type="GO" id="GO:0006914">
    <property type="term" value="P:autophagy"/>
    <property type="evidence" value="ECO:0000314"/>
    <property type="project" value="CAFA"/>
</dbReference>
<dbReference type="GO" id="GO:0009267">
    <property type="term" value="P:cellular response to starvation"/>
    <property type="evidence" value="ECO:0000250"/>
    <property type="project" value="UniProtKB"/>
</dbReference>
<dbReference type="GO" id="GO:0051649">
    <property type="term" value="P:establishment of localization in cell"/>
    <property type="evidence" value="ECO:0000315"/>
    <property type="project" value="MGI"/>
</dbReference>
<dbReference type="GO" id="GO:0000423">
    <property type="term" value="P:mitophagy"/>
    <property type="evidence" value="ECO:0000250"/>
    <property type="project" value="UniProtKB"/>
</dbReference>
<dbReference type="GO" id="GO:0070254">
    <property type="term" value="P:mucus secretion"/>
    <property type="evidence" value="ECO:0000315"/>
    <property type="project" value="MGI"/>
</dbReference>
<dbReference type="GO" id="GO:0070257">
    <property type="term" value="P:positive regulation of mucus secretion"/>
    <property type="evidence" value="ECO:0000315"/>
    <property type="project" value="MGI"/>
</dbReference>
<dbReference type="CDD" id="cd17235">
    <property type="entry name" value="Ubl_ATG8_MAP1LC3B"/>
    <property type="match status" value="1"/>
</dbReference>
<dbReference type="FunFam" id="3.10.20.90:FF:000059">
    <property type="entry name" value="Microtubule-associated proteins 1A/1B light chain 3B"/>
    <property type="match status" value="1"/>
</dbReference>
<dbReference type="Gene3D" id="3.10.20.90">
    <property type="entry name" value="Phosphatidylinositol 3-kinase Catalytic Subunit, Chain A, domain 1"/>
    <property type="match status" value="1"/>
</dbReference>
<dbReference type="InterPro" id="IPR004241">
    <property type="entry name" value="Atg8-like"/>
</dbReference>
<dbReference type="InterPro" id="IPR029071">
    <property type="entry name" value="Ubiquitin-like_domsf"/>
</dbReference>
<dbReference type="PANTHER" id="PTHR10969">
    <property type="entry name" value="MICROTUBULE-ASSOCIATED PROTEINS 1A/1B LIGHT CHAIN 3-RELATED"/>
    <property type="match status" value="1"/>
</dbReference>
<dbReference type="Pfam" id="PF02991">
    <property type="entry name" value="ATG8"/>
    <property type="match status" value="1"/>
</dbReference>
<dbReference type="SUPFAM" id="SSF54236">
    <property type="entry name" value="Ubiquitin-like"/>
    <property type="match status" value="1"/>
</dbReference>
<feature type="chain" id="PRO_0000017200" description="Microtubule-associated protein 1 light chain 3 beta">
    <location>
        <begin position="1"/>
        <end position="120"/>
    </location>
</feature>
<feature type="propeptide" id="PRO_0000017201" description="Removed in mature form">
    <location>
        <begin position="121"/>
        <end position="125"/>
    </location>
</feature>
<feature type="site" description="Cleavage; by ATG4B" evidence="2">
    <location>
        <begin position="120"/>
        <end position="121"/>
    </location>
</feature>
<feature type="lipid moiety-binding region" description="Phosphatidylethanolamine amidated glycine; alternate" evidence="2">
    <location>
        <position position="120"/>
    </location>
</feature>
<feature type="lipid moiety-binding region" description="Phosphatidylserine amidated glycine; alternate" evidence="2">
    <location>
        <position position="120"/>
    </location>
</feature>
<feature type="sequence conflict" description="In Ref. 2; BAB22641." evidence="12" ref="2">
    <original>V</original>
    <variation>L</variation>
    <location>
        <position position="89"/>
    </location>
</feature>
<feature type="helix" evidence="15">
    <location>
        <begin position="7"/>
        <end position="10"/>
    </location>
</feature>
<feature type="helix" evidence="15">
    <location>
        <begin position="13"/>
        <end position="26"/>
    </location>
</feature>
<feature type="strand" evidence="15">
    <location>
        <begin position="30"/>
        <end position="37"/>
    </location>
</feature>
<feature type="strand" evidence="15">
    <location>
        <begin position="51"/>
        <end position="55"/>
    </location>
</feature>
<feature type="helix" evidence="15">
    <location>
        <begin position="60"/>
        <end position="70"/>
    </location>
</feature>
<feature type="strand" evidence="15">
    <location>
        <begin position="80"/>
        <end position="83"/>
    </location>
</feature>
<feature type="turn" evidence="15">
    <location>
        <begin position="84"/>
        <end position="86"/>
    </location>
</feature>
<feature type="helix" evidence="15">
    <location>
        <begin position="95"/>
        <end position="102"/>
    </location>
</feature>
<feature type="strand" evidence="15">
    <location>
        <begin position="109"/>
        <end position="115"/>
    </location>
</feature>
<feature type="helix" evidence="16">
    <location>
        <begin position="118"/>
        <end position="122"/>
    </location>
</feature>
<comment type="function">
    <text evidence="2">Ubiquitin-like modifier involved in formation of autophagosomal vacuoles (autophagosomes). Plays a role in mitophagy which contributes to regulate mitochondrial quantity and quality by eliminating the mitochondria to a basal level to fulfill cellular energy requirements and preventing excess ROS production. In response to cellular stress and upon mitochondria fission, binds C-18 ceramides and anchors autophagolysosomes to outer mitochondrial membranes to eliminate damaged mitochondria. While LC3s are involved in elongation of the phagophore membrane, the GABARAP/GATE-16 subfamily is essential for a later stage in autophagosome maturation. Promotes primary ciliogenesis by removing OFD1 from centriolar satellites via the autophagic pathway. Through its interaction with the reticulophagy receptor TEX264, participates in the remodeling of subdomains of the endoplasmic reticulum into autophagosomes upon nutrient stress, which then fuse with lysosomes for endoplasmic reticulum turnover. Upon nutrient stress, directly recruits cofactor JMY to the phagophore membrane surfaces and promotes JMY's actin nucleation activity and autophagosome biogenesis during autophagy.</text>
</comment>
<comment type="subunit">
    <text evidence="1 2 6 7 8 9 11">3 different light chains, LC1 (a cleavage product of MAP1B), LC2 (a cleavage product of MAP1A) and LC3 (produced by one of the MAP1LC3 genes), can associate with the MAP1A or MAP1B heavy chains (By similarity). Interacts at microtubules with CABP1 (via EF-hands 1 and 2) but not with calmodulin. Interacts with FYCO1 (via C-terminus). Interacts with TP53INP1 and TP53INP2 (By similarity). Interacts with TBC1D25 (PubMed:21383079). Directly interacts with SQSTM1; this interaction leads to MAP1LC3B recruitment to inclusion bodies containing polyubiquitinated protein aggregates and to inclusion body degradation by autophagy. Interacts with ATG4B, MAPK15 and BNIP3. Interacts with MAPB1, KEAP1, PCM1, OFD1, CEP131, and TECPR2. Interacts with TBC1D5. Found in a complex with UBQLN1 and UBQLN2. Interacts with UBQLN4 (via STI1 1 and 2 domains). Interacts with UBQLN1 in the presence of UBQLN4. Interacts with ATG13. Interacts with reticulophagy regulators RETREG1, RETREG2 and RETREG3 (PubMed:34338405). Interacts with PLCL1; the interaction inhibits autophagosome formation (PubMed:23399561). Interacts with TRIM16. Interacts with CRY1 and PER2 (PubMed:29937374). Interacts with the reticulophagy receptor TEX264 (By similarity). Membrane-bound form LC3-II interacts with PHB1 and PHB2; the interaction takes place upon Parkin-mediated mitochondrial damage (By similarity). Interacts with PJVK; the interaction is direct (PubMed:30936319). Interacts with KBTBD6 and KBTBD7; the interaction is direct (By similarity). Interacts with AMBRA1 (via LIR motif) (By similarity). Interacts with JMY; the interaction results in the activation of JYM's nucleation activity in the cytoplasm (By similarity). Interacts with MOAP1 (via LIR motif) (By similarity). Interacts with TAX1BP1 (By similarity). Interacts with Irgm1 (By similarity). Interacts with STX17 (By similarity). Interacts (the lipidate and non-lipidated LC3 form) with DNM2; this interaction mediates recycling endosome scission leading to autophagosome release (By similarity). Interacts with IRGQ (By similarity).</text>
</comment>
<comment type="subcellular location">
    <subcellularLocation>
        <location evidence="3 4">Cytoplasmic vesicle</location>
        <location evidence="3 4">Autophagosome membrane</location>
        <topology evidence="2">Lipid-anchor</topology>
    </subcellularLocation>
    <subcellularLocation>
        <location evidence="4">Endomembrane system</location>
        <topology evidence="2">Lipid-anchor</topology>
    </subcellularLocation>
    <subcellularLocation>
        <location evidence="2">Mitochondrion membrane</location>
        <topology evidence="2">Lipid-anchor</topology>
    </subcellularLocation>
    <subcellularLocation>
        <location evidence="13">Cytoplasm</location>
        <location evidence="13">Cytoskeleton</location>
    </subcellularLocation>
    <subcellularLocation>
        <location evidence="2">Cytoplasmic vesicle</location>
    </subcellularLocation>
    <text evidence="2">LC3-II binds to the autophagic membranes. LC3-II localizes with the mitochondrial inner membrane during Parkin-mediated mitophagy (By similarity). Also localizes to discrete punctae along the ciliary axoneme (By similarity).</text>
</comment>
<comment type="PTM">
    <text evidence="2 4 5 10">The precursor molecule is cleaved by ATG4 (ATG4A, ATG4B, ATG4C or ATG4D) to expose the glycine at the C-terminus and form the cytosolic form, LC3-I (PubMed:12207896, PubMed:14530254). The processed form is then activated by APG7L/ATG7, transferred to ATG3 and conjugated to phosphatidylethanolamine (PE) phospholipid to form the membrane-bound form, LC3-II (By similarity). During non-canonical autophagy, the processed form is conjugated to phosphatidylserine (PS) phospholipid (By similarity). ATG4 proteins also mediate the delipidation of PE-conjugated forms (PubMed:33795848). In addition, ATG4B and ATG4D mediate delipidation of ATG8 proteins conjugated to PS during non-canonical autophagy (By similarity). ATG4B constitutes the major protein for proteolytic activation (By similarity). ATG4D is the main enzyme for delipidation activity (PubMed:33795848).</text>
</comment>
<comment type="PTM">
    <text evidence="2">Phosphorylation by PKA inhibits conjugation of phosphatidylethanolamine (PE). Interaction with MAPK15 reduces the inhibitory phosphorylation and increases autophagy activity.</text>
</comment>
<comment type="PTM">
    <text evidence="2">Ubiquitinated by BIRC6; this activity is inhibited by DIABLO/SMAC.</text>
</comment>
<comment type="similarity">
    <text evidence="12">Belongs to the ATG8 family.</text>
</comment>
<accession>Q9CQV6</accession>
<accession>Q3U9W5</accession>
<accession>Q9D1R0</accession>